<feature type="chain" id="PRO_1000148820" description="Undecaprenyl-diphosphatase">
    <location>
        <begin position="1"/>
        <end position="282"/>
    </location>
</feature>
<feature type="transmembrane region" description="Helical" evidence="1">
    <location>
        <begin position="90"/>
        <end position="110"/>
    </location>
</feature>
<feature type="transmembrane region" description="Helical" evidence="1">
    <location>
        <begin position="121"/>
        <end position="141"/>
    </location>
</feature>
<feature type="transmembrane region" description="Helical" evidence="1">
    <location>
        <begin position="165"/>
        <end position="185"/>
    </location>
</feature>
<feature type="transmembrane region" description="Helical" evidence="1">
    <location>
        <begin position="194"/>
        <end position="214"/>
    </location>
</feature>
<feature type="transmembrane region" description="Helical" evidence="1">
    <location>
        <begin position="228"/>
        <end position="248"/>
    </location>
</feature>
<feature type="transmembrane region" description="Helical" evidence="1">
    <location>
        <begin position="256"/>
        <end position="276"/>
    </location>
</feature>
<name>UPPP_MYCLB</name>
<protein>
    <recommendedName>
        <fullName evidence="1">Undecaprenyl-diphosphatase</fullName>
        <ecNumber evidence="1">3.6.1.27</ecNumber>
    </recommendedName>
    <alternativeName>
        <fullName evidence="1">Bacitracin resistance protein</fullName>
    </alternativeName>
    <alternativeName>
        <fullName evidence="1">Undecaprenyl pyrophosphate phosphatase</fullName>
    </alternativeName>
</protein>
<proteinExistence type="inferred from homology"/>
<keyword id="KW-0046">Antibiotic resistance</keyword>
<keyword id="KW-1003">Cell membrane</keyword>
<keyword id="KW-0133">Cell shape</keyword>
<keyword id="KW-0961">Cell wall biogenesis/degradation</keyword>
<keyword id="KW-0378">Hydrolase</keyword>
<keyword id="KW-0472">Membrane</keyword>
<keyword id="KW-0573">Peptidoglycan synthesis</keyword>
<keyword id="KW-0812">Transmembrane</keyword>
<keyword id="KW-1133">Transmembrane helix</keyword>
<sequence>MTAVSAMSWWQVIVLAVVQGLTEFLPVSSSGHLAIVSRILFTGDAGASFTAVSQLGTEVAVLVYFGRDIVRILHAWCRGLTVTLHRTADYWLGWYVIIGTIPICILGLVCKDEIRSGIRPLWVVATALVAFSGVIAFAEYVGRQNRCIEQLNWRDALVVGVAQTLALIPGVSRSGSTISAGLFLGLDRELAARFGFLLAIPAVFASGLFSIPDAFHPITEGMSATGAQLLVATVIAFVVGLVAVSWLLRFLVQHNLYWFVGYRIVVGVGVLILLAVKTVAAT</sequence>
<reference key="1">
    <citation type="journal article" date="2009" name="Nat. Genet.">
        <title>Comparative genomic and phylogeographic analysis of Mycobacterium leprae.</title>
        <authorList>
            <person name="Monot M."/>
            <person name="Honore N."/>
            <person name="Garnier T."/>
            <person name="Zidane N."/>
            <person name="Sherafi D."/>
            <person name="Paniz-Mondolfi A."/>
            <person name="Matsuoka M."/>
            <person name="Taylor G.M."/>
            <person name="Donoghue H.D."/>
            <person name="Bouwman A."/>
            <person name="Mays S."/>
            <person name="Watson C."/>
            <person name="Lockwood D."/>
            <person name="Khamispour A."/>
            <person name="Dowlati Y."/>
            <person name="Jianping S."/>
            <person name="Rea T.H."/>
            <person name="Vera-Cabrera L."/>
            <person name="Stefani M.M."/>
            <person name="Banu S."/>
            <person name="Macdonald M."/>
            <person name="Sapkota B.R."/>
            <person name="Spencer J.S."/>
            <person name="Thomas J."/>
            <person name="Harshman K."/>
            <person name="Singh P."/>
            <person name="Busso P."/>
            <person name="Gattiker A."/>
            <person name="Rougemont J."/>
            <person name="Brennan P.J."/>
            <person name="Cole S.T."/>
        </authorList>
    </citation>
    <scope>NUCLEOTIDE SEQUENCE [LARGE SCALE GENOMIC DNA]</scope>
    <source>
        <strain>Br4923</strain>
    </source>
</reference>
<organism>
    <name type="scientific">Mycobacterium leprae (strain Br4923)</name>
    <dbReference type="NCBI Taxonomy" id="561304"/>
    <lineage>
        <taxon>Bacteria</taxon>
        <taxon>Bacillati</taxon>
        <taxon>Actinomycetota</taxon>
        <taxon>Actinomycetes</taxon>
        <taxon>Mycobacteriales</taxon>
        <taxon>Mycobacteriaceae</taxon>
        <taxon>Mycobacterium</taxon>
    </lineage>
</organism>
<gene>
    <name evidence="1" type="primary">uppP</name>
    <name type="ordered locus">MLBr01297</name>
</gene>
<evidence type="ECO:0000255" key="1">
    <source>
        <dbReference type="HAMAP-Rule" id="MF_01006"/>
    </source>
</evidence>
<accession>B8ZRD4</accession>
<dbReference type="EC" id="3.6.1.27" evidence="1"/>
<dbReference type="EMBL" id="FM211192">
    <property type="protein sequence ID" value="CAR71392.1"/>
    <property type="molecule type" value="Genomic_DNA"/>
</dbReference>
<dbReference type="SMR" id="B8ZRD4"/>
<dbReference type="KEGG" id="mlb:MLBr01297"/>
<dbReference type="HOGENOM" id="CLU_060296_1_0_11"/>
<dbReference type="Proteomes" id="UP000006900">
    <property type="component" value="Chromosome"/>
</dbReference>
<dbReference type="GO" id="GO:0005886">
    <property type="term" value="C:plasma membrane"/>
    <property type="evidence" value="ECO:0007669"/>
    <property type="project" value="UniProtKB-SubCell"/>
</dbReference>
<dbReference type="GO" id="GO:0050380">
    <property type="term" value="F:undecaprenyl-diphosphatase activity"/>
    <property type="evidence" value="ECO:0007669"/>
    <property type="project" value="UniProtKB-UniRule"/>
</dbReference>
<dbReference type="GO" id="GO:0071555">
    <property type="term" value="P:cell wall organization"/>
    <property type="evidence" value="ECO:0007669"/>
    <property type="project" value="UniProtKB-KW"/>
</dbReference>
<dbReference type="GO" id="GO:0009252">
    <property type="term" value="P:peptidoglycan biosynthetic process"/>
    <property type="evidence" value="ECO:0007669"/>
    <property type="project" value="UniProtKB-KW"/>
</dbReference>
<dbReference type="GO" id="GO:0008360">
    <property type="term" value="P:regulation of cell shape"/>
    <property type="evidence" value="ECO:0007669"/>
    <property type="project" value="UniProtKB-KW"/>
</dbReference>
<dbReference type="GO" id="GO:0046677">
    <property type="term" value="P:response to antibiotic"/>
    <property type="evidence" value="ECO:0007669"/>
    <property type="project" value="UniProtKB-UniRule"/>
</dbReference>
<dbReference type="HAMAP" id="MF_01006">
    <property type="entry name" value="Undec_diphosphatase"/>
    <property type="match status" value="1"/>
</dbReference>
<dbReference type="InterPro" id="IPR003824">
    <property type="entry name" value="UppP"/>
</dbReference>
<dbReference type="NCBIfam" id="NF001392">
    <property type="entry name" value="PRK00281.2-1"/>
    <property type="match status" value="1"/>
</dbReference>
<dbReference type="NCBIfam" id="TIGR00753">
    <property type="entry name" value="undec_PP_bacA"/>
    <property type="match status" value="1"/>
</dbReference>
<dbReference type="PANTHER" id="PTHR30622">
    <property type="entry name" value="UNDECAPRENYL-DIPHOSPHATASE"/>
    <property type="match status" value="1"/>
</dbReference>
<dbReference type="PANTHER" id="PTHR30622:SF4">
    <property type="entry name" value="UNDECAPRENYL-DIPHOSPHATASE"/>
    <property type="match status" value="1"/>
</dbReference>
<dbReference type="Pfam" id="PF02673">
    <property type="entry name" value="BacA"/>
    <property type="match status" value="1"/>
</dbReference>
<comment type="function">
    <text evidence="1">Catalyzes the dephosphorylation of undecaprenyl diphosphate (UPP). Confers resistance to bacitracin.</text>
</comment>
<comment type="catalytic activity">
    <reaction evidence="1">
        <text>di-trans,octa-cis-undecaprenyl diphosphate + H2O = di-trans,octa-cis-undecaprenyl phosphate + phosphate + H(+)</text>
        <dbReference type="Rhea" id="RHEA:28094"/>
        <dbReference type="ChEBI" id="CHEBI:15377"/>
        <dbReference type="ChEBI" id="CHEBI:15378"/>
        <dbReference type="ChEBI" id="CHEBI:43474"/>
        <dbReference type="ChEBI" id="CHEBI:58405"/>
        <dbReference type="ChEBI" id="CHEBI:60392"/>
        <dbReference type="EC" id="3.6.1.27"/>
    </reaction>
</comment>
<comment type="subcellular location">
    <subcellularLocation>
        <location evidence="1">Cell membrane</location>
        <topology evidence="1">Multi-pass membrane protein</topology>
    </subcellularLocation>
</comment>
<comment type="miscellaneous">
    <text>Bacitracin is thought to be involved in the inhibition of peptidoglycan synthesis by sequestering undecaprenyl diphosphate, thereby reducing the pool of lipid carrier available.</text>
</comment>
<comment type="similarity">
    <text evidence="1">Belongs to the UppP family.</text>
</comment>